<proteinExistence type="inferred from homology"/>
<accession>B0CED9</accession>
<protein>
    <recommendedName>
        <fullName evidence="1">UPF0367 protein AM1_1885</fullName>
    </recommendedName>
</protein>
<reference key="1">
    <citation type="journal article" date="2008" name="Proc. Natl. Acad. Sci. U.S.A.">
        <title>Niche adaptation and genome expansion in the chlorophyll d-producing cyanobacterium Acaryochloris marina.</title>
        <authorList>
            <person name="Swingley W.D."/>
            <person name="Chen M."/>
            <person name="Cheung P.C."/>
            <person name="Conrad A.L."/>
            <person name="Dejesa L.C."/>
            <person name="Hao J."/>
            <person name="Honchak B.M."/>
            <person name="Karbach L.E."/>
            <person name="Kurdoglu A."/>
            <person name="Lahiri S."/>
            <person name="Mastrian S.D."/>
            <person name="Miyashita H."/>
            <person name="Page L."/>
            <person name="Ramakrishna P."/>
            <person name="Satoh S."/>
            <person name="Sattley W.M."/>
            <person name="Shimada Y."/>
            <person name="Taylor H.L."/>
            <person name="Tomo T."/>
            <person name="Tsuchiya T."/>
            <person name="Wang Z.T."/>
            <person name="Raymond J."/>
            <person name="Mimuro M."/>
            <person name="Blankenship R.E."/>
            <person name="Touchman J.W."/>
        </authorList>
    </citation>
    <scope>NUCLEOTIDE SEQUENCE [LARGE SCALE GENOMIC DNA]</scope>
    <source>
        <strain>MBIC 11017</strain>
    </source>
</reference>
<sequence>MYTIDISLRGTPLGLSVQRKESADAEALYQQVLAAIKSGNPTILEMTCDREPDKKAAVLVNEITAVQLSDKSGGAGAGRAAGFFELGA</sequence>
<name>Y1885_ACAM1</name>
<comment type="similarity">
    <text evidence="1">Belongs to the UPF0367 family.</text>
</comment>
<organism>
    <name type="scientific">Acaryochloris marina (strain MBIC 11017)</name>
    <dbReference type="NCBI Taxonomy" id="329726"/>
    <lineage>
        <taxon>Bacteria</taxon>
        <taxon>Bacillati</taxon>
        <taxon>Cyanobacteriota</taxon>
        <taxon>Cyanophyceae</taxon>
        <taxon>Acaryochloridales</taxon>
        <taxon>Acaryochloridaceae</taxon>
        <taxon>Acaryochloris</taxon>
    </lineage>
</organism>
<gene>
    <name type="ordered locus">AM1_1885</name>
</gene>
<keyword id="KW-1185">Reference proteome</keyword>
<evidence type="ECO:0000255" key="1">
    <source>
        <dbReference type="HAMAP-Rule" id="MF_01360"/>
    </source>
</evidence>
<feature type="chain" id="PRO_1000086958" description="UPF0367 protein AM1_1885">
    <location>
        <begin position="1"/>
        <end position="88"/>
    </location>
</feature>
<dbReference type="EMBL" id="CP000828">
    <property type="protein sequence ID" value="ABW26905.1"/>
    <property type="molecule type" value="Genomic_DNA"/>
</dbReference>
<dbReference type="RefSeq" id="WP_012162407.1">
    <property type="nucleotide sequence ID" value="NC_009925.1"/>
</dbReference>
<dbReference type="STRING" id="329726.AM1_1885"/>
<dbReference type="KEGG" id="amr:AM1_1885"/>
<dbReference type="eggNOG" id="ENOG5032YB3">
    <property type="taxonomic scope" value="Bacteria"/>
</dbReference>
<dbReference type="HOGENOM" id="CLU_180777_0_0_3"/>
<dbReference type="OrthoDB" id="516864at2"/>
<dbReference type="Proteomes" id="UP000000268">
    <property type="component" value="Chromosome"/>
</dbReference>
<dbReference type="HAMAP" id="MF_01360">
    <property type="entry name" value="UPF0367"/>
    <property type="match status" value="1"/>
</dbReference>
<dbReference type="InterPro" id="IPR020885">
    <property type="entry name" value="UPF0367"/>
</dbReference>
<dbReference type="NCBIfam" id="NF010236">
    <property type="entry name" value="PRK13683.1"/>
    <property type="match status" value="1"/>
</dbReference>